<dbReference type="EMBL" id="CU928145">
    <property type="protein sequence ID" value="CAV00186.1"/>
    <property type="molecule type" value="Genomic_DNA"/>
</dbReference>
<dbReference type="RefSeq" id="WP_000619389.1">
    <property type="nucleotide sequence ID" value="NZ_CP028304.1"/>
</dbReference>
<dbReference type="SMR" id="B7L4U4"/>
<dbReference type="GeneID" id="93778582"/>
<dbReference type="KEGG" id="eck:EC55989_3822"/>
<dbReference type="HOGENOM" id="CLU_094569_0_0_6"/>
<dbReference type="Proteomes" id="UP000000746">
    <property type="component" value="Chromosome"/>
</dbReference>
<dbReference type="GO" id="GO:0051539">
    <property type="term" value="F:4 iron, 4 sulfur cluster binding"/>
    <property type="evidence" value="ECO:0007669"/>
    <property type="project" value="UniProtKB-UniRule"/>
</dbReference>
<dbReference type="GO" id="GO:0005506">
    <property type="term" value="F:iron ion binding"/>
    <property type="evidence" value="ECO:0007669"/>
    <property type="project" value="InterPro"/>
</dbReference>
<dbReference type="GO" id="GO:0016226">
    <property type="term" value="P:iron-sulfur cluster assembly"/>
    <property type="evidence" value="ECO:0007669"/>
    <property type="project" value="UniProtKB-UniRule"/>
</dbReference>
<dbReference type="GO" id="GO:0051604">
    <property type="term" value="P:protein maturation"/>
    <property type="evidence" value="ECO:0007669"/>
    <property type="project" value="UniProtKB-UniRule"/>
</dbReference>
<dbReference type="FunFam" id="2.60.300.12:FF:000004">
    <property type="entry name" value="Fe/S biogenesis protein NfuA"/>
    <property type="match status" value="1"/>
</dbReference>
<dbReference type="FunFam" id="3.30.300.130:FF:000002">
    <property type="entry name" value="Fe/S biogenesis protein NfuA"/>
    <property type="match status" value="1"/>
</dbReference>
<dbReference type="Gene3D" id="3.30.300.130">
    <property type="entry name" value="Fe-S cluster assembly (FSCA)"/>
    <property type="match status" value="1"/>
</dbReference>
<dbReference type="Gene3D" id="2.60.300.12">
    <property type="entry name" value="HesB-like domain"/>
    <property type="match status" value="1"/>
</dbReference>
<dbReference type="HAMAP" id="MF_01637">
    <property type="entry name" value="Fe_S_biogen_NfuA"/>
    <property type="match status" value="1"/>
</dbReference>
<dbReference type="InterPro" id="IPR017726">
    <property type="entry name" value="Fe/S_biogenesis_protein_NfuA"/>
</dbReference>
<dbReference type="InterPro" id="IPR000361">
    <property type="entry name" value="FeS_biogenesis"/>
</dbReference>
<dbReference type="InterPro" id="IPR034904">
    <property type="entry name" value="FSCA_dom_sf"/>
</dbReference>
<dbReference type="InterPro" id="IPR035903">
    <property type="entry name" value="HesB-like_dom_sf"/>
</dbReference>
<dbReference type="InterPro" id="IPR001075">
    <property type="entry name" value="NIF_FeS_clus_asmbl_NifU_C"/>
</dbReference>
<dbReference type="NCBIfam" id="NF008392">
    <property type="entry name" value="PRK11190.1"/>
    <property type="match status" value="1"/>
</dbReference>
<dbReference type="NCBIfam" id="TIGR03341">
    <property type="entry name" value="YhgI_GntY"/>
    <property type="match status" value="1"/>
</dbReference>
<dbReference type="PANTHER" id="PTHR11178:SF51">
    <property type="entry name" value="FE_S BIOGENESIS PROTEIN NFUA"/>
    <property type="match status" value="1"/>
</dbReference>
<dbReference type="PANTHER" id="PTHR11178">
    <property type="entry name" value="IRON-SULFUR CLUSTER SCAFFOLD PROTEIN NFU-RELATED"/>
    <property type="match status" value="1"/>
</dbReference>
<dbReference type="Pfam" id="PF01521">
    <property type="entry name" value="Fe-S_biosyn"/>
    <property type="match status" value="1"/>
</dbReference>
<dbReference type="Pfam" id="PF01106">
    <property type="entry name" value="NifU"/>
    <property type="match status" value="1"/>
</dbReference>
<dbReference type="SUPFAM" id="SSF117916">
    <property type="entry name" value="Fe-S cluster assembly (FSCA) domain-like"/>
    <property type="match status" value="1"/>
</dbReference>
<dbReference type="SUPFAM" id="SSF89360">
    <property type="entry name" value="HesB-like domain"/>
    <property type="match status" value="1"/>
</dbReference>
<organism>
    <name type="scientific">Escherichia coli (strain 55989 / EAEC)</name>
    <dbReference type="NCBI Taxonomy" id="585055"/>
    <lineage>
        <taxon>Bacteria</taxon>
        <taxon>Pseudomonadati</taxon>
        <taxon>Pseudomonadota</taxon>
        <taxon>Gammaproteobacteria</taxon>
        <taxon>Enterobacterales</taxon>
        <taxon>Enterobacteriaceae</taxon>
        <taxon>Escherichia</taxon>
    </lineage>
</organism>
<sequence length="191" mass="20998">MIRISDAAQAHFAKLLANQEEGTQIRVFVINPGTPNAECGVSYCPPDAVEATDTALKFDLLTAYVDELSAPYLEDAEIDFVTDQLGSQLTLKAPNAKMRKVADDAPLMERVEYMLQSQINPQLAGHGGRVSLMEITEDGYAILQFGGGCNGCSMVDVTLKEGIEKQLLNEFPELKGVRDLTEHQRGEHSYY</sequence>
<gene>
    <name evidence="1" type="primary">nfuA</name>
    <name type="ordered locus">EC55989_3822</name>
</gene>
<name>NFUA_ECO55</name>
<proteinExistence type="inferred from homology"/>
<protein>
    <recommendedName>
        <fullName evidence="1">Fe/S biogenesis protein NfuA</fullName>
    </recommendedName>
</protein>
<comment type="function">
    <text evidence="1">Involved in iron-sulfur cluster biogenesis. Binds a 4Fe-4S cluster, can transfer this cluster to apoproteins, and thereby intervenes in the maturation of Fe/S proteins. Could also act as a scaffold/chaperone for damaged Fe/S proteins.</text>
</comment>
<comment type="cofactor">
    <cofactor evidence="1">
        <name>[4Fe-4S] cluster</name>
        <dbReference type="ChEBI" id="CHEBI:49883"/>
    </cofactor>
    <text evidence="1">Binds 1 [4Fe-4S] cluster per subunit. The cluster is presumably bound at the interface of two monomers.</text>
</comment>
<comment type="subunit">
    <text evidence="1">Homodimer.</text>
</comment>
<comment type="similarity">
    <text evidence="1">Belongs to the NfuA family.</text>
</comment>
<reference key="1">
    <citation type="journal article" date="2009" name="PLoS Genet.">
        <title>Organised genome dynamics in the Escherichia coli species results in highly diverse adaptive paths.</title>
        <authorList>
            <person name="Touchon M."/>
            <person name="Hoede C."/>
            <person name="Tenaillon O."/>
            <person name="Barbe V."/>
            <person name="Baeriswyl S."/>
            <person name="Bidet P."/>
            <person name="Bingen E."/>
            <person name="Bonacorsi S."/>
            <person name="Bouchier C."/>
            <person name="Bouvet O."/>
            <person name="Calteau A."/>
            <person name="Chiapello H."/>
            <person name="Clermont O."/>
            <person name="Cruveiller S."/>
            <person name="Danchin A."/>
            <person name="Diard M."/>
            <person name="Dossat C."/>
            <person name="Karoui M.E."/>
            <person name="Frapy E."/>
            <person name="Garry L."/>
            <person name="Ghigo J.M."/>
            <person name="Gilles A.M."/>
            <person name="Johnson J."/>
            <person name="Le Bouguenec C."/>
            <person name="Lescat M."/>
            <person name="Mangenot S."/>
            <person name="Martinez-Jehanne V."/>
            <person name="Matic I."/>
            <person name="Nassif X."/>
            <person name="Oztas S."/>
            <person name="Petit M.A."/>
            <person name="Pichon C."/>
            <person name="Rouy Z."/>
            <person name="Ruf C.S."/>
            <person name="Schneider D."/>
            <person name="Tourret J."/>
            <person name="Vacherie B."/>
            <person name="Vallenet D."/>
            <person name="Medigue C."/>
            <person name="Rocha E.P.C."/>
            <person name="Denamur E."/>
        </authorList>
    </citation>
    <scope>NUCLEOTIDE SEQUENCE [LARGE SCALE GENOMIC DNA]</scope>
    <source>
        <strain>55989 / EAEC</strain>
    </source>
</reference>
<feature type="chain" id="PRO_1000186744" description="Fe/S biogenesis protein NfuA">
    <location>
        <begin position="1"/>
        <end position="191"/>
    </location>
</feature>
<feature type="binding site" evidence="1">
    <location>
        <position position="149"/>
    </location>
    <ligand>
        <name>[4Fe-4S] cluster</name>
        <dbReference type="ChEBI" id="CHEBI:49883"/>
    </ligand>
</feature>
<feature type="binding site" evidence="1">
    <location>
        <position position="152"/>
    </location>
    <ligand>
        <name>[4Fe-4S] cluster</name>
        <dbReference type="ChEBI" id="CHEBI:49883"/>
    </ligand>
</feature>
<evidence type="ECO:0000255" key="1">
    <source>
        <dbReference type="HAMAP-Rule" id="MF_01637"/>
    </source>
</evidence>
<keyword id="KW-0004">4Fe-4S</keyword>
<keyword id="KW-0408">Iron</keyword>
<keyword id="KW-0411">Iron-sulfur</keyword>
<keyword id="KW-0479">Metal-binding</keyword>
<keyword id="KW-1185">Reference proteome</keyword>
<accession>B7L4U4</accession>